<protein>
    <recommendedName>
        <fullName>Uncharacterized protein CT_696</fullName>
    </recommendedName>
</protein>
<feature type="chain" id="PRO_0000218411" description="Uncharacterized protein CT_696">
    <location>
        <begin position="1"/>
        <end position="392"/>
    </location>
</feature>
<sequence>MLLDSRFPTDYYLRILELVIRDASCKLVYNRRLHMLEAIPLDQKLSTDQEGESSILREVISELLAHSGESYAISAQLLAVIDIYLKQEQPSNSWFARIFRKRERARKRQTINKLLLLKSILFFERQRPVKKVESVADSILQRSKGNFSSWDDFTHDVQTQKSGRETDMPDSLRGRVEEDAASQMIVEVLLAFLDNQDMYLSVSFEILRNFLEEKVLSKRSLSPRSHEAIKKIKDLYLVSPEDFQTFIGGVITESLFQEEDQLVVGCMIFSQEGRELFDSWKGISQTYPHDMLYTQAFLAEVVLHVVQHHIHLNAKVKPTSPEQVGSLYSIRDHSPQAWARMMRVLLMRWLLDYHFDVYAHLKEEILRCPPRPPFWQMIPSESGDGTFRKEAR</sequence>
<reference key="1">
    <citation type="journal article" date="1998" name="Science">
        <title>Genome sequence of an obligate intracellular pathogen of humans: Chlamydia trachomatis.</title>
        <authorList>
            <person name="Stephens R.S."/>
            <person name="Kalman S."/>
            <person name="Lammel C.J."/>
            <person name="Fan J."/>
            <person name="Marathe R."/>
            <person name="Aravind L."/>
            <person name="Mitchell W.P."/>
            <person name="Olinger L."/>
            <person name="Tatusov R.L."/>
            <person name="Zhao Q."/>
            <person name="Koonin E.V."/>
            <person name="Davis R.W."/>
        </authorList>
    </citation>
    <scope>NUCLEOTIDE SEQUENCE [LARGE SCALE GENOMIC DNA]</scope>
    <source>
        <strain>ATCC VR-885 / DSM 19411 / UW-3/Cx</strain>
    </source>
</reference>
<organism>
    <name type="scientific">Chlamydia trachomatis serovar D (strain ATCC VR-885 / DSM 19411 / UW-3/Cx)</name>
    <dbReference type="NCBI Taxonomy" id="272561"/>
    <lineage>
        <taxon>Bacteria</taxon>
        <taxon>Pseudomonadati</taxon>
        <taxon>Chlamydiota</taxon>
        <taxon>Chlamydiia</taxon>
        <taxon>Chlamydiales</taxon>
        <taxon>Chlamydiaceae</taxon>
        <taxon>Chlamydia/Chlamydophila group</taxon>
        <taxon>Chlamydia</taxon>
    </lineage>
</organism>
<dbReference type="EMBL" id="AE001273">
    <property type="protein sequence ID" value="AAC68291.2"/>
    <property type="molecule type" value="Genomic_DNA"/>
</dbReference>
<dbReference type="PIR" id="B71482">
    <property type="entry name" value="B71482"/>
</dbReference>
<dbReference type="RefSeq" id="NP_220215.1">
    <property type="nucleotide sequence ID" value="NC_000117.1"/>
</dbReference>
<dbReference type="RefSeq" id="WP_009872071.1">
    <property type="nucleotide sequence ID" value="NC_000117.1"/>
</dbReference>
<dbReference type="SMR" id="O84702"/>
<dbReference type="STRING" id="272561.CT_696"/>
<dbReference type="EnsemblBacteria" id="AAC68291">
    <property type="protein sequence ID" value="AAC68291"/>
    <property type="gene ID" value="CT_696"/>
</dbReference>
<dbReference type="GeneID" id="884485"/>
<dbReference type="KEGG" id="ctr:CT_696"/>
<dbReference type="PATRIC" id="fig|272561.5.peg.766"/>
<dbReference type="HOGENOM" id="CLU_743345_0_0_0"/>
<dbReference type="InParanoid" id="O84702"/>
<dbReference type="OrthoDB" id="18966at2"/>
<dbReference type="Proteomes" id="UP000000431">
    <property type="component" value="Chromosome"/>
</dbReference>
<name>Y696_CHLTR</name>
<comment type="similarity">
    <text evidence="1">Belongs to the chlamydial CPn_0675/CT_696/TC_0068 family.</text>
</comment>
<gene>
    <name type="ordered locus">CT_696</name>
</gene>
<evidence type="ECO:0000305" key="1"/>
<accession>O84702</accession>
<proteinExistence type="inferred from homology"/>
<keyword id="KW-1185">Reference proteome</keyword>